<sequence>MQEQYRPEEIESKVQLHWDEKRTFEVTEDESKEKYYCLSMLPYPSGRLHMGHVRNYTIGDVIARYQRMLGKNVLQPIGWDAFGLPAEGAAVKNNTAPAPWTYDNIAYMKNQLKMLGFGYDWSRELATCTPEYYRWEQKFFTELYKKGLVYKKTSAVNWCPNDQTVLANEQVIDGCCWRCDTKVERKEIPQWFIKITAYADELLNDLDKLDHWPDTVKTMQRNWIGRSEGVEITFNVNDYDNMLTVYTTRPDTFMGCTYLAVAAGHPLAQKAAENNPELAAFIDECRNTKVAEAEMATMEKKGVDTGFKAVHPLTGEEIPVWAANFVLMEYGTGAVMAVPGHDQRDYEFASKYGLNIKPVILAADGSEPDLSQQALTEKGVLFNSGEFNGLDHEAAFNAIADKLTAMGVGERKVNYRLRDWGVSRQRYWGAPIPMVTLEDGTVMPTPDDQLPVILPEDVVMDGITSPIKADPEWAKTTVNGMPALRETDTFDTFMESSWYYARYTCPEYKEGMLDSEAANYWLPVDIYIGGIEHAIMHLLYFRFFHKLMRDAGMVNSDEPAKQLLCQGMVLADAFYYVGENGERNWVSPVDAIVERDEKGRIVKAKDAAGHELVYTGMSKMSKSKNNGIDPQVMVERYGADTVRLFMMFASPADMTLEWQESGVEGANRFLKRVWKLVYEHTAKGDVAALNVDALTEDQKALRRDVHKTIAKVTDDIGRRQTFNTAIAAIMELMNKLAKAPTDGEQDRALMQEALLAVVRMLNPFTPHICFTLWQELKGEGDIDNAPWPVADEKAMVEDSTLVVVQVNGKVRAKITVLVDATEEQVRERAGQEHLVAKYLDGVTVRKVIYVPGKLLNLVVG</sequence>
<dbReference type="EC" id="6.1.1.4" evidence="1"/>
<dbReference type="EMBL" id="CP000038">
    <property type="protein sequence ID" value="AAZ87362.1"/>
    <property type="molecule type" value="Genomic_DNA"/>
</dbReference>
<dbReference type="RefSeq" id="WP_005141714.1">
    <property type="nucleotide sequence ID" value="NC_007384.1"/>
</dbReference>
<dbReference type="SMR" id="Q3Z4F0"/>
<dbReference type="GeneID" id="93776840"/>
<dbReference type="KEGG" id="ssn:SSON_0596"/>
<dbReference type="HOGENOM" id="CLU_004427_0_0_6"/>
<dbReference type="Proteomes" id="UP000002529">
    <property type="component" value="Chromosome"/>
</dbReference>
<dbReference type="GO" id="GO:0005829">
    <property type="term" value="C:cytosol"/>
    <property type="evidence" value="ECO:0007669"/>
    <property type="project" value="TreeGrafter"/>
</dbReference>
<dbReference type="GO" id="GO:0002161">
    <property type="term" value="F:aminoacyl-tRNA deacylase activity"/>
    <property type="evidence" value="ECO:0007669"/>
    <property type="project" value="InterPro"/>
</dbReference>
<dbReference type="GO" id="GO:0005524">
    <property type="term" value="F:ATP binding"/>
    <property type="evidence" value="ECO:0007669"/>
    <property type="project" value="UniProtKB-UniRule"/>
</dbReference>
<dbReference type="GO" id="GO:0004823">
    <property type="term" value="F:leucine-tRNA ligase activity"/>
    <property type="evidence" value="ECO:0007669"/>
    <property type="project" value="UniProtKB-UniRule"/>
</dbReference>
<dbReference type="GO" id="GO:0006429">
    <property type="term" value="P:leucyl-tRNA aminoacylation"/>
    <property type="evidence" value="ECO:0007669"/>
    <property type="project" value="UniProtKB-UniRule"/>
</dbReference>
<dbReference type="CDD" id="cd07958">
    <property type="entry name" value="Anticodon_Ia_Leu_BEm"/>
    <property type="match status" value="1"/>
</dbReference>
<dbReference type="CDD" id="cd00812">
    <property type="entry name" value="LeuRS_core"/>
    <property type="match status" value="1"/>
</dbReference>
<dbReference type="FunFam" id="1.10.730.10:FF:000002">
    <property type="entry name" value="Leucine--tRNA ligase"/>
    <property type="match status" value="2"/>
</dbReference>
<dbReference type="FunFam" id="2.20.28.290:FF:000001">
    <property type="entry name" value="Leucine--tRNA ligase"/>
    <property type="match status" value="1"/>
</dbReference>
<dbReference type="FunFam" id="3.10.20.590:FF:000001">
    <property type="entry name" value="Leucine--tRNA ligase"/>
    <property type="match status" value="1"/>
</dbReference>
<dbReference type="FunFam" id="3.40.50.620:FF:000003">
    <property type="entry name" value="Leucine--tRNA ligase"/>
    <property type="match status" value="1"/>
</dbReference>
<dbReference type="FunFam" id="3.40.50.620:FF:000124">
    <property type="entry name" value="Leucine--tRNA ligase"/>
    <property type="match status" value="1"/>
</dbReference>
<dbReference type="FunFam" id="3.90.740.10:FF:000012">
    <property type="entry name" value="Leucine--tRNA ligase"/>
    <property type="match status" value="1"/>
</dbReference>
<dbReference type="Gene3D" id="2.20.28.290">
    <property type="match status" value="1"/>
</dbReference>
<dbReference type="Gene3D" id="3.10.20.590">
    <property type="match status" value="1"/>
</dbReference>
<dbReference type="Gene3D" id="3.40.50.620">
    <property type="entry name" value="HUPs"/>
    <property type="match status" value="2"/>
</dbReference>
<dbReference type="Gene3D" id="1.10.730.10">
    <property type="entry name" value="Isoleucyl-tRNA Synthetase, Domain 1"/>
    <property type="match status" value="1"/>
</dbReference>
<dbReference type="HAMAP" id="MF_00049_B">
    <property type="entry name" value="Leu_tRNA_synth_B"/>
    <property type="match status" value="1"/>
</dbReference>
<dbReference type="InterPro" id="IPR001412">
    <property type="entry name" value="aa-tRNA-synth_I_CS"/>
</dbReference>
<dbReference type="InterPro" id="IPR002300">
    <property type="entry name" value="aa-tRNA-synth_Ia"/>
</dbReference>
<dbReference type="InterPro" id="IPR002302">
    <property type="entry name" value="Leu-tRNA-ligase"/>
</dbReference>
<dbReference type="InterPro" id="IPR025709">
    <property type="entry name" value="Leu_tRNA-synth_edit"/>
</dbReference>
<dbReference type="InterPro" id="IPR013155">
    <property type="entry name" value="M/V/L/I-tRNA-synth_anticd-bd"/>
</dbReference>
<dbReference type="InterPro" id="IPR015413">
    <property type="entry name" value="Methionyl/Leucyl_tRNA_Synth"/>
</dbReference>
<dbReference type="InterPro" id="IPR014729">
    <property type="entry name" value="Rossmann-like_a/b/a_fold"/>
</dbReference>
<dbReference type="InterPro" id="IPR009080">
    <property type="entry name" value="tRNAsynth_Ia_anticodon-bd"/>
</dbReference>
<dbReference type="InterPro" id="IPR009008">
    <property type="entry name" value="Val/Leu/Ile-tRNA-synth_edit"/>
</dbReference>
<dbReference type="NCBIfam" id="TIGR00396">
    <property type="entry name" value="leuS_bact"/>
    <property type="match status" value="1"/>
</dbReference>
<dbReference type="PANTHER" id="PTHR43740:SF2">
    <property type="entry name" value="LEUCINE--TRNA LIGASE, MITOCHONDRIAL"/>
    <property type="match status" value="1"/>
</dbReference>
<dbReference type="PANTHER" id="PTHR43740">
    <property type="entry name" value="LEUCYL-TRNA SYNTHETASE"/>
    <property type="match status" value="1"/>
</dbReference>
<dbReference type="Pfam" id="PF08264">
    <property type="entry name" value="Anticodon_1"/>
    <property type="match status" value="1"/>
</dbReference>
<dbReference type="Pfam" id="PF00133">
    <property type="entry name" value="tRNA-synt_1"/>
    <property type="match status" value="2"/>
</dbReference>
<dbReference type="Pfam" id="PF13603">
    <property type="entry name" value="tRNA-synt_1_2"/>
    <property type="match status" value="1"/>
</dbReference>
<dbReference type="Pfam" id="PF09334">
    <property type="entry name" value="tRNA-synt_1g"/>
    <property type="match status" value="1"/>
</dbReference>
<dbReference type="PRINTS" id="PR00985">
    <property type="entry name" value="TRNASYNTHLEU"/>
</dbReference>
<dbReference type="SUPFAM" id="SSF47323">
    <property type="entry name" value="Anticodon-binding domain of a subclass of class I aminoacyl-tRNA synthetases"/>
    <property type="match status" value="1"/>
</dbReference>
<dbReference type="SUPFAM" id="SSF52374">
    <property type="entry name" value="Nucleotidylyl transferase"/>
    <property type="match status" value="1"/>
</dbReference>
<dbReference type="SUPFAM" id="SSF50677">
    <property type="entry name" value="ValRS/IleRS/LeuRS editing domain"/>
    <property type="match status" value="1"/>
</dbReference>
<dbReference type="PROSITE" id="PS00178">
    <property type="entry name" value="AA_TRNA_LIGASE_I"/>
    <property type="match status" value="1"/>
</dbReference>
<reference key="1">
    <citation type="journal article" date="2005" name="Nucleic Acids Res.">
        <title>Genome dynamics and diversity of Shigella species, the etiologic agents of bacillary dysentery.</title>
        <authorList>
            <person name="Yang F."/>
            <person name="Yang J."/>
            <person name="Zhang X."/>
            <person name="Chen L."/>
            <person name="Jiang Y."/>
            <person name="Yan Y."/>
            <person name="Tang X."/>
            <person name="Wang J."/>
            <person name="Xiong Z."/>
            <person name="Dong J."/>
            <person name="Xue Y."/>
            <person name="Zhu Y."/>
            <person name="Xu X."/>
            <person name="Sun L."/>
            <person name="Chen S."/>
            <person name="Nie H."/>
            <person name="Peng J."/>
            <person name="Xu J."/>
            <person name="Wang Y."/>
            <person name="Yuan Z."/>
            <person name="Wen Y."/>
            <person name="Yao Z."/>
            <person name="Shen Y."/>
            <person name="Qiang B."/>
            <person name="Hou Y."/>
            <person name="Yu J."/>
            <person name="Jin Q."/>
        </authorList>
    </citation>
    <scope>NUCLEOTIDE SEQUENCE [LARGE SCALE GENOMIC DNA]</scope>
    <source>
        <strain>Ss046</strain>
    </source>
</reference>
<keyword id="KW-0030">Aminoacyl-tRNA synthetase</keyword>
<keyword id="KW-0067">ATP-binding</keyword>
<keyword id="KW-0963">Cytoplasm</keyword>
<keyword id="KW-0436">Ligase</keyword>
<keyword id="KW-0547">Nucleotide-binding</keyword>
<keyword id="KW-0648">Protein biosynthesis</keyword>
<keyword id="KW-1185">Reference proteome</keyword>
<evidence type="ECO:0000255" key="1">
    <source>
        <dbReference type="HAMAP-Rule" id="MF_00049"/>
    </source>
</evidence>
<organism>
    <name type="scientific">Shigella sonnei (strain Ss046)</name>
    <dbReference type="NCBI Taxonomy" id="300269"/>
    <lineage>
        <taxon>Bacteria</taxon>
        <taxon>Pseudomonadati</taxon>
        <taxon>Pseudomonadota</taxon>
        <taxon>Gammaproteobacteria</taxon>
        <taxon>Enterobacterales</taxon>
        <taxon>Enterobacteriaceae</taxon>
        <taxon>Shigella</taxon>
    </lineage>
</organism>
<name>SYL_SHISS</name>
<feature type="chain" id="PRO_1000009432" description="Leucine--tRNA ligase">
    <location>
        <begin position="1"/>
        <end position="860"/>
    </location>
</feature>
<feature type="short sequence motif" description="'HIGH' region">
    <location>
        <begin position="42"/>
        <end position="52"/>
    </location>
</feature>
<feature type="short sequence motif" description="'KMSKS' region">
    <location>
        <begin position="619"/>
        <end position="623"/>
    </location>
</feature>
<feature type="binding site" evidence="1">
    <location>
        <position position="622"/>
    </location>
    <ligand>
        <name>ATP</name>
        <dbReference type="ChEBI" id="CHEBI:30616"/>
    </ligand>
</feature>
<proteinExistence type="inferred from homology"/>
<comment type="catalytic activity">
    <reaction evidence="1">
        <text>tRNA(Leu) + L-leucine + ATP = L-leucyl-tRNA(Leu) + AMP + diphosphate</text>
        <dbReference type="Rhea" id="RHEA:11688"/>
        <dbReference type="Rhea" id="RHEA-COMP:9613"/>
        <dbReference type="Rhea" id="RHEA-COMP:9622"/>
        <dbReference type="ChEBI" id="CHEBI:30616"/>
        <dbReference type="ChEBI" id="CHEBI:33019"/>
        <dbReference type="ChEBI" id="CHEBI:57427"/>
        <dbReference type="ChEBI" id="CHEBI:78442"/>
        <dbReference type="ChEBI" id="CHEBI:78494"/>
        <dbReference type="ChEBI" id="CHEBI:456215"/>
        <dbReference type="EC" id="6.1.1.4"/>
    </reaction>
</comment>
<comment type="subcellular location">
    <subcellularLocation>
        <location evidence="1">Cytoplasm</location>
    </subcellularLocation>
</comment>
<comment type="similarity">
    <text evidence="1">Belongs to the class-I aminoacyl-tRNA synthetase family.</text>
</comment>
<protein>
    <recommendedName>
        <fullName evidence="1">Leucine--tRNA ligase</fullName>
        <ecNumber evidence="1">6.1.1.4</ecNumber>
    </recommendedName>
    <alternativeName>
        <fullName evidence="1">Leucyl-tRNA synthetase</fullName>
        <shortName evidence="1">LeuRS</shortName>
    </alternativeName>
</protein>
<gene>
    <name evidence="1" type="primary">leuS</name>
    <name type="ordered locus">SSON_0596</name>
</gene>
<accession>Q3Z4F0</accession>